<name>Y091_MYCPN</name>
<proteinExistence type="predicted"/>
<reference key="1">
    <citation type="journal article" date="1996" name="Nucleic Acids Res.">
        <title>Complete sequence analysis of the genome of the bacterium Mycoplasma pneumoniae.</title>
        <authorList>
            <person name="Himmelreich R."/>
            <person name="Hilbert H."/>
            <person name="Plagens H."/>
            <person name="Pirkl E."/>
            <person name="Li B.-C."/>
            <person name="Herrmann R."/>
        </authorList>
    </citation>
    <scope>NUCLEOTIDE SEQUENCE [LARGE SCALE GENOMIC DNA]</scope>
    <source>
        <strain>ATCC 29342 / M129 / Subtype 1</strain>
    </source>
</reference>
<keyword id="KW-1185">Reference proteome</keyword>
<dbReference type="EMBL" id="U00089">
    <property type="protein sequence ID" value="AAB95711.1"/>
    <property type="molecule type" value="Genomic_DNA"/>
</dbReference>
<dbReference type="PIR" id="S73390">
    <property type="entry name" value="S73390"/>
</dbReference>
<dbReference type="RefSeq" id="WP_010874448.1">
    <property type="nucleotide sequence ID" value="NZ_OU342337.1"/>
</dbReference>
<dbReference type="IntAct" id="P75602">
    <property type="interactions" value="1"/>
</dbReference>
<dbReference type="STRING" id="272634.MPN_091"/>
<dbReference type="EnsemblBacteria" id="AAB95711">
    <property type="protein sequence ID" value="AAB95711"/>
    <property type="gene ID" value="MPN_091"/>
</dbReference>
<dbReference type="KEGG" id="mpn:MPN_091"/>
<dbReference type="HOGENOM" id="CLU_1675942_0_0_14"/>
<dbReference type="Proteomes" id="UP000000808">
    <property type="component" value="Chromosome"/>
</dbReference>
<protein>
    <recommendedName>
        <fullName>Uncharacterized protein MPN_091</fullName>
    </recommendedName>
</protein>
<accession>P75602</accession>
<gene>
    <name type="ordered locus">MPN_091</name>
    <name type="ORF">MP064</name>
    <name type="ORF">R02_orf138</name>
</gene>
<organism>
    <name type="scientific">Mycoplasma pneumoniae (strain ATCC 29342 / M129 / Subtype 1)</name>
    <name type="common">Mycoplasmoides pneumoniae</name>
    <dbReference type="NCBI Taxonomy" id="272634"/>
    <lineage>
        <taxon>Bacteria</taxon>
        <taxon>Bacillati</taxon>
        <taxon>Mycoplasmatota</taxon>
        <taxon>Mycoplasmoidales</taxon>
        <taxon>Mycoplasmoidaceae</taxon>
        <taxon>Mycoplasmoides</taxon>
    </lineage>
</organism>
<comment type="similarity">
    <text evidence="2">To M.pneumoniae MPN_413 and MPN_463.</text>
</comment>
<sequence>MGGWMLCAPPIYTPHTNSWTERWDRTSWWRWSAQRWSGWSFKIVRANKALRVMAKTKMPLVLIPPSPNKPYSKLAINQELHLIPPKKTSPATSSSLKPRPGPRGCLNARLSWRCPTLSRKVRVPTIKVPMVRAPSTPP</sequence>
<feature type="chain" id="PRO_0000210641" description="Uncharacterized protein MPN_091">
    <location>
        <begin position="1"/>
        <end position="138"/>
    </location>
</feature>
<feature type="region of interest" description="Disordered" evidence="1">
    <location>
        <begin position="84"/>
        <end position="104"/>
    </location>
</feature>
<feature type="compositionally biased region" description="Low complexity" evidence="1">
    <location>
        <begin position="85"/>
        <end position="98"/>
    </location>
</feature>
<evidence type="ECO:0000256" key="1">
    <source>
        <dbReference type="SAM" id="MobiDB-lite"/>
    </source>
</evidence>
<evidence type="ECO:0000305" key="2"/>